<sequence length="172" mass="19107">MLSFLQNPRQAAAQVLNFALILSTAFMMWKGLSVASDSPSPIVVVLSGSMEPAFQRGDLLFLWNRNLLEETKVGEIVVYNVKGKDIPIVHRLVRKFGAGPKAKLLTKGDNNVADDTELYARGQDYIEREDIIGSVVGYIPFVGYVTILLSEHPWLKTVMLGMMGLVVVLQRE</sequence>
<dbReference type="EC" id="3.4.21.89" evidence="1"/>
<dbReference type="EMBL" id="CH476622">
    <property type="protein sequence ID" value="EDN96168.1"/>
    <property type="molecule type" value="Genomic_DNA"/>
</dbReference>
<dbReference type="RefSeq" id="XP_001596900.1">
    <property type="nucleotide sequence ID" value="XM_001596850.1"/>
</dbReference>
<dbReference type="SMR" id="A7E716"/>
<dbReference type="FunCoup" id="A7E716">
    <property type="interactions" value="629"/>
</dbReference>
<dbReference type="STRING" id="665079.A7E716"/>
<dbReference type="MEROPS" id="S26.010"/>
<dbReference type="EnsemblFungi" id="EDN96168">
    <property type="protein sequence ID" value="EDN96168"/>
    <property type="gene ID" value="SS1G_01092"/>
</dbReference>
<dbReference type="GeneID" id="5493698"/>
<dbReference type="KEGG" id="ssl:SS1G_01092"/>
<dbReference type="eggNOG" id="KOG3342">
    <property type="taxonomic scope" value="Eukaryota"/>
</dbReference>
<dbReference type="HOGENOM" id="CLU_089996_0_0_1"/>
<dbReference type="InParanoid" id="A7E716"/>
<dbReference type="OMA" id="ILMNEYP"/>
<dbReference type="Proteomes" id="UP000001312">
    <property type="component" value="Unassembled WGS sequence"/>
</dbReference>
<dbReference type="GO" id="GO:0005787">
    <property type="term" value="C:signal peptidase complex"/>
    <property type="evidence" value="ECO:0000318"/>
    <property type="project" value="GO_Central"/>
</dbReference>
<dbReference type="GO" id="GO:0008233">
    <property type="term" value="F:peptidase activity"/>
    <property type="evidence" value="ECO:0000318"/>
    <property type="project" value="GO_Central"/>
</dbReference>
<dbReference type="GO" id="GO:0004252">
    <property type="term" value="F:serine-type endopeptidase activity"/>
    <property type="evidence" value="ECO:0007669"/>
    <property type="project" value="UniProtKB-EC"/>
</dbReference>
<dbReference type="GO" id="GO:0045047">
    <property type="term" value="P:protein targeting to ER"/>
    <property type="evidence" value="ECO:0007669"/>
    <property type="project" value="EnsemblFungi"/>
</dbReference>
<dbReference type="GO" id="GO:0006465">
    <property type="term" value="P:signal peptide processing"/>
    <property type="evidence" value="ECO:0000318"/>
    <property type="project" value="GO_Central"/>
</dbReference>
<dbReference type="CDD" id="cd06530">
    <property type="entry name" value="S26_SPase_I"/>
    <property type="match status" value="1"/>
</dbReference>
<dbReference type="FunFam" id="2.10.109.10:FF:000003">
    <property type="entry name" value="Signal peptidase complex catalytic subunit SEC11"/>
    <property type="match status" value="1"/>
</dbReference>
<dbReference type="Gene3D" id="2.10.109.10">
    <property type="entry name" value="Umud Fragment, subunit A"/>
    <property type="match status" value="1"/>
</dbReference>
<dbReference type="InterPro" id="IPR036286">
    <property type="entry name" value="LexA/Signal_pep-like_sf"/>
</dbReference>
<dbReference type="InterPro" id="IPR019756">
    <property type="entry name" value="Pept_S26A_signal_pept_1_Ser-AS"/>
</dbReference>
<dbReference type="InterPro" id="IPR019533">
    <property type="entry name" value="Peptidase_S26"/>
</dbReference>
<dbReference type="InterPro" id="IPR001733">
    <property type="entry name" value="Peptidase_S26B"/>
</dbReference>
<dbReference type="NCBIfam" id="TIGR02228">
    <property type="entry name" value="sigpep_I_arch"/>
    <property type="match status" value="1"/>
</dbReference>
<dbReference type="PANTHER" id="PTHR10806">
    <property type="entry name" value="SIGNAL PEPTIDASE COMPLEX CATALYTIC SUBUNIT SEC11"/>
    <property type="match status" value="1"/>
</dbReference>
<dbReference type="PANTHER" id="PTHR10806:SF6">
    <property type="entry name" value="SIGNAL PEPTIDASE COMPLEX CATALYTIC SUBUNIT SEC11"/>
    <property type="match status" value="1"/>
</dbReference>
<dbReference type="PRINTS" id="PR00728">
    <property type="entry name" value="SIGNALPTASE"/>
</dbReference>
<dbReference type="SUPFAM" id="SSF51306">
    <property type="entry name" value="LexA/Signal peptidase"/>
    <property type="match status" value="1"/>
</dbReference>
<dbReference type="PROSITE" id="PS00501">
    <property type="entry name" value="SPASE_I_1"/>
    <property type="match status" value="1"/>
</dbReference>
<comment type="function">
    <text evidence="1 2">Catalytic component of the signal peptidase complex (SPC) which catalyzes the cleavage of N-terminal signal sequences from nascent proteins as they are translocated into the lumen of the endoplasmic reticulum (By similarity). Specifically cleaves N-terminal signal peptides that contain a hydrophobic alpha-helix (h-region) shorter than 18-20 amino acids (By similarity).</text>
</comment>
<comment type="catalytic activity">
    <reaction evidence="1">
        <text>Cleavage of hydrophobic, N-terminal signal or leader sequences from secreted and periplasmic proteins.</text>
        <dbReference type="EC" id="3.4.21.89"/>
    </reaction>
</comment>
<comment type="subunit">
    <text evidence="1 2">Component of the signal peptidase complex (SPC) composed of a catalytic subunit SEC11 and three accessory subunits SPC1, SPC2 and SPC3 (By similarity). The complex induces a local thinning of the ER membrane which is used to measure the length of the signal peptide (SP) h-region of protein substrates. This ensures the selectivity of the complex towards h-regions shorter than 18-20 amino acids (By similarity). SPC associates with the translocon complex (By similarity).</text>
</comment>
<comment type="subcellular location">
    <subcellularLocation>
        <location evidence="1">Endoplasmic reticulum membrane</location>
        <topology evidence="1">Single-pass type II membrane protein</topology>
    </subcellularLocation>
</comment>
<comment type="domain">
    <text evidence="2">The C-terminal short (CTS) helix is essential for catalytic activity. It may be accommodated as a transmembrane helix in the thinned membrane environment of the complex, similarly to the signal peptide in the complex substrates.</text>
</comment>
<comment type="similarity">
    <text evidence="4">Belongs to the peptidase S26B family.</text>
</comment>
<feature type="chain" id="PRO_0000412365" description="Signal peptidase complex catalytic subunit sec11">
    <location>
        <begin position="1"/>
        <end position="172"/>
    </location>
</feature>
<feature type="topological domain" description="Cytoplasmic" evidence="4">
    <location>
        <begin position="1"/>
        <end position="14"/>
    </location>
</feature>
<feature type="transmembrane region" description="Helical; Signal-anchor for type II membrane protein" evidence="3">
    <location>
        <begin position="15"/>
        <end position="35"/>
    </location>
</feature>
<feature type="topological domain" description="Lumenal" evidence="4">
    <location>
        <begin position="36"/>
        <end position="172"/>
    </location>
</feature>
<feature type="region of interest" description="C-terminal short (CTS) helix" evidence="2">
    <location>
        <begin position="158"/>
        <end position="169"/>
    </location>
</feature>
<feature type="active site" description="Charge relay system" evidence="1">
    <location>
        <position position="49"/>
    </location>
</feature>
<feature type="active site" description="Charge relay system" evidence="1">
    <location>
        <position position="90"/>
    </location>
</feature>
<feature type="active site" description="Charge relay system" evidence="1">
    <location>
        <position position="115"/>
    </location>
</feature>
<evidence type="ECO:0000250" key="1">
    <source>
        <dbReference type="UniProtKB" id="P15367"/>
    </source>
</evidence>
<evidence type="ECO:0000250" key="2">
    <source>
        <dbReference type="UniProtKB" id="P67812"/>
    </source>
</evidence>
<evidence type="ECO:0000255" key="3"/>
<evidence type="ECO:0000305" key="4"/>
<organism>
    <name type="scientific">Sclerotinia sclerotiorum (strain ATCC 18683 / 1980 / Ss-1)</name>
    <name type="common">White mold</name>
    <name type="synonym">Whetzelinia sclerotiorum</name>
    <dbReference type="NCBI Taxonomy" id="665079"/>
    <lineage>
        <taxon>Eukaryota</taxon>
        <taxon>Fungi</taxon>
        <taxon>Dikarya</taxon>
        <taxon>Ascomycota</taxon>
        <taxon>Pezizomycotina</taxon>
        <taxon>Leotiomycetes</taxon>
        <taxon>Helotiales</taxon>
        <taxon>Sclerotiniaceae</taxon>
        <taxon>Sclerotinia</taxon>
    </lineage>
</organism>
<gene>
    <name type="primary">sec11</name>
    <name type="ORF">SS1G_01092</name>
</gene>
<accession>A7E716</accession>
<reference key="1">
    <citation type="journal article" date="2011" name="PLoS Genet.">
        <title>Genomic analysis of the necrotrophic fungal pathogens Sclerotinia sclerotiorum and Botrytis cinerea.</title>
        <authorList>
            <person name="Amselem J."/>
            <person name="Cuomo C.A."/>
            <person name="van Kan J.A.L."/>
            <person name="Viaud M."/>
            <person name="Benito E.P."/>
            <person name="Couloux A."/>
            <person name="Coutinho P.M."/>
            <person name="de Vries R.P."/>
            <person name="Dyer P.S."/>
            <person name="Fillinger S."/>
            <person name="Fournier E."/>
            <person name="Gout L."/>
            <person name="Hahn M."/>
            <person name="Kohn L."/>
            <person name="Lapalu N."/>
            <person name="Plummer K.M."/>
            <person name="Pradier J.-M."/>
            <person name="Quevillon E."/>
            <person name="Sharon A."/>
            <person name="Simon A."/>
            <person name="ten Have A."/>
            <person name="Tudzynski B."/>
            <person name="Tudzynski P."/>
            <person name="Wincker P."/>
            <person name="Andrew M."/>
            <person name="Anthouard V."/>
            <person name="Beever R.E."/>
            <person name="Beffa R."/>
            <person name="Benoit I."/>
            <person name="Bouzid O."/>
            <person name="Brault B."/>
            <person name="Chen Z."/>
            <person name="Choquer M."/>
            <person name="Collemare J."/>
            <person name="Cotton P."/>
            <person name="Danchin E.G."/>
            <person name="Da Silva C."/>
            <person name="Gautier A."/>
            <person name="Giraud C."/>
            <person name="Giraud T."/>
            <person name="Gonzalez C."/>
            <person name="Grossetete S."/>
            <person name="Gueldener U."/>
            <person name="Henrissat B."/>
            <person name="Howlett B.J."/>
            <person name="Kodira C."/>
            <person name="Kretschmer M."/>
            <person name="Lappartient A."/>
            <person name="Leroch M."/>
            <person name="Levis C."/>
            <person name="Mauceli E."/>
            <person name="Neuveglise C."/>
            <person name="Oeser B."/>
            <person name="Pearson M."/>
            <person name="Poulain J."/>
            <person name="Poussereau N."/>
            <person name="Quesneville H."/>
            <person name="Rascle C."/>
            <person name="Schumacher J."/>
            <person name="Segurens B."/>
            <person name="Sexton A."/>
            <person name="Silva E."/>
            <person name="Sirven C."/>
            <person name="Soanes D.M."/>
            <person name="Talbot N.J."/>
            <person name="Templeton M."/>
            <person name="Yandava C."/>
            <person name="Yarden O."/>
            <person name="Zeng Q."/>
            <person name="Rollins J.A."/>
            <person name="Lebrun M.-H."/>
            <person name="Dickman M."/>
        </authorList>
    </citation>
    <scope>NUCLEOTIDE SEQUENCE [LARGE SCALE GENOMIC DNA]</scope>
    <source>
        <strain>ATCC 18683 / 1980 / Ss-1</strain>
    </source>
</reference>
<protein>
    <recommendedName>
        <fullName>Signal peptidase complex catalytic subunit sec11</fullName>
        <ecNumber evidence="1">3.4.21.89</ecNumber>
    </recommendedName>
    <alternativeName>
        <fullName>Signal peptidase I</fullName>
    </alternativeName>
</protein>
<name>SEC11_SCLS1</name>
<proteinExistence type="inferred from homology"/>
<keyword id="KW-0256">Endoplasmic reticulum</keyword>
<keyword id="KW-0378">Hydrolase</keyword>
<keyword id="KW-0472">Membrane</keyword>
<keyword id="KW-0645">Protease</keyword>
<keyword id="KW-1185">Reference proteome</keyword>
<keyword id="KW-0735">Signal-anchor</keyword>
<keyword id="KW-0812">Transmembrane</keyword>
<keyword id="KW-1133">Transmembrane helix</keyword>